<comment type="function">
    <text evidence="1">Synthesizes alpha-1,4-glucan chains using ADP-glucose.</text>
</comment>
<comment type="catalytic activity">
    <reaction evidence="1">
        <text>[(1-&gt;4)-alpha-D-glucosyl](n) + ADP-alpha-D-glucose = [(1-&gt;4)-alpha-D-glucosyl](n+1) + ADP + H(+)</text>
        <dbReference type="Rhea" id="RHEA:18189"/>
        <dbReference type="Rhea" id="RHEA-COMP:9584"/>
        <dbReference type="Rhea" id="RHEA-COMP:9587"/>
        <dbReference type="ChEBI" id="CHEBI:15378"/>
        <dbReference type="ChEBI" id="CHEBI:15444"/>
        <dbReference type="ChEBI" id="CHEBI:57498"/>
        <dbReference type="ChEBI" id="CHEBI:456216"/>
        <dbReference type="EC" id="2.4.1.21"/>
    </reaction>
</comment>
<comment type="pathway">
    <text evidence="1">Glycan biosynthesis; glycogen biosynthesis.</text>
</comment>
<comment type="similarity">
    <text evidence="1">Belongs to the glycosyltransferase 1 family. Bacterial/plant glycogen synthase subfamily.</text>
</comment>
<keyword id="KW-0320">Glycogen biosynthesis</keyword>
<keyword id="KW-0328">Glycosyltransferase</keyword>
<keyword id="KW-1185">Reference proteome</keyword>
<keyword id="KW-0808">Transferase</keyword>
<protein>
    <recommendedName>
        <fullName evidence="1">Glycogen synthase</fullName>
        <ecNumber evidence="1">2.4.1.21</ecNumber>
    </recommendedName>
    <alternativeName>
        <fullName evidence="1">Starch [bacterial glycogen] synthase</fullName>
    </alternativeName>
</protein>
<name>GLGA_AERHH</name>
<organism>
    <name type="scientific">Aeromonas hydrophila subsp. hydrophila (strain ATCC 7966 / DSM 30187 / BCRC 13018 / CCUG 14551 / JCM 1027 / KCTC 2358 / NCIMB 9240 / NCTC 8049)</name>
    <dbReference type="NCBI Taxonomy" id="380703"/>
    <lineage>
        <taxon>Bacteria</taxon>
        <taxon>Pseudomonadati</taxon>
        <taxon>Pseudomonadota</taxon>
        <taxon>Gammaproteobacteria</taxon>
        <taxon>Aeromonadales</taxon>
        <taxon>Aeromonadaceae</taxon>
        <taxon>Aeromonas</taxon>
    </lineage>
</organism>
<reference key="1">
    <citation type="journal article" date="2006" name="J. Bacteriol.">
        <title>Genome sequence of Aeromonas hydrophila ATCC 7966T: jack of all trades.</title>
        <authorList>
            <person name="Seshadri R."/>
            <person name="Joseph S.W."/>
            <person name="Chopra A.K."/>
            <person name="Sha J."/>
            <person name="Shaw J."/>
            <person name="Graf J."/>
            <person name="Haft D.H."/>
            <person name="Wu M."/>
            <person name="Ren Q."/>
            <person name="Rosovitz M.J."/>
            <person name="Madupu R."/>
            <person name="Tallon L."/>
            <person name="Kim M."/>
            <person name="Jin S."/>
            <person name="Vuong H."/>
            <person name="Stine O.C."/>
            <person name="Ali A."/>
            <person name="Horneman A.J."/>
            <person name="Heidelberg J.F."/>
        </authorList>
    </citation>
    <scope>NUCLEOTIDE SEQUENCE [LARGE SCALE GENOMIC DNA]</scope>
    <source>
        <strain>ATCC 7966 / DSM 30187 / BCRC 13018 / CCUG 14551 / JCM 1027 / KCTC 2358 / NCIMB 9240 / NCTC 8049</strain>
    </source>
</reference>
<evidence type="ECO:0000255" key="1">
    <source>
        <dbReference type="HAMAP-Rule" id="MF_00484"/>
    </source>
</evidence>
<sequence length="486" mass="54874">MAINPLKILFVASEVEGLVKTGGLADVARALPLYLAQKGHDVRIMLPFYKTIKRRDEAKLLVSRWLPTHPGLPDIGYRIYQMDLEGVCVYLLDCPQYFDRPQLYAENNQAYPDNGERFAFLAAAALHASEQLAFAPDIVHCNDWHTGLLPLLLKTRHAHNPFFQHTRSVISIHNAAFQGVFERQQFWAVPEIADYEQRISYDYGHVNLLKCGVLYADKINAVSPNYASELLTHLGAHGMASIFQQRAADLRGILNGCDYQDWDPAFDDFLPATYDVDNLAGKHICKQSLQQETGLPVVDLPIYGMVCRLTEQKGVHLLLPVLDKFLHHKVQVVIVGSGDPSLAAQLQTLAQQFPDRLAFINTYDDRLAHLVEAGADFFLMPSLFEPCGLNQMYSLAYGTLPLVRAVGGLKDTVVDWDADPEQATGFCFNDPTANILLDAMRRSLLYYLQDPEQFARVQRNAMNTRFNWPDSVTQYEQMYQDALARH</sequence>
<dbReference type="EC" id="2.4.1.21" evidence="1"/>
<dbReference type="EMBL" id="CP000462">
    <property type="protein sequence ID" value="ABK39656.1"/>
    <property type="molecule type" value="Genomic_DNA"/>
</dbReference>
<dbReference type="RefSeq" id="WP_011707514.1">
    <property type="nucleotide sequence ID" value="NC_008570.1"/>
</dbReference>
<dbReference type="RefSeq" id="YP_858252.1">
    <property type="nucleotide sequence ID" value="NC_008570.1"/>
</dbReference>
<dbReference type="SMR" id="A0KPQ1"/>
<dbReference type="STRING" id="380703.AHA_3804"/>
<dbReference type="CAZy" id="GT5">
    <property type="family name" value="Glycosyltransferase Family 5"/>
</dbReference>
<dbReference type="EnsemblBacteria" id="ABK39656">
    <property type="protein sequence ID" value="ABK39656"/>
    <property type="gene ID" value="AHA_3804"/>
</dbReference>
<dbReference type="GeneID" id="4489131"/>
<dbReference type="KEGG" id="aha:AHA_3804"/>
<dbReference type="PATRIC" id="fig|380703.7.peg.3781"/>
<dbReference type="eggNOG" id="COG0297">
    <property type="taxonomic scope" value="Bacteria"/>
</dbReference>
<dbReference type="HOGENOM" id="CLU_009583_18_2_6"/>
<dbReference type="OrthoDB" id="9808590at2"/>
<dbReference type="UniPathway" id="UPA00164"/>
<dbReference type="Proteomes" id="UP000000756">
    <property type="component" value="Chromosome"/>
</dbReference>
<dbReference type="GO" id="GO:0005829">
    <property type="term" value="C:cytosol"/>
    <property type="evidence" value="ECO:0007669"/>
    <property type="project" value="TreeGrafter"/>
</dbReference>
<dbReference type="GO" id="GO:0009011">
    <property type="term" value="F:alpha-1,4-glucan glucosyltransferase (ADP-glucose donor) activity"/>
    <property type="evidence" value="ECO:0007669"/>
    <property type="project" value="UniProtKB-UniRule"/>
</dbReference>
<dbReference type="GO" id="GO:0004373">
    <property type="term" value="F:alpha-1,4-glucan glucosyltransferase (UDP-glucose donor) activity"/>
    <property type="evidence" value="ECO:0007669"/>
    <property type="project" value="InterPro"/>
</dbReference>
<dbReference type="GO" id="GO:0005978">
    <property type="term" value="P:glycogen biosynthetic process"/>
    <property type="evidence" value="ECO:0007669"/>
    <property type="project" value="UniProtKB-UniRule"/>
</dbReference>
<dbReference type="CDD" id="cd03791">
    <property type="entry name" value="GT5_Glycogen_synthase_DULL1-like"/>
    <property type="match status" value="1"/>
</dbReference>
<dbReference type="Gene3D" id="3.40.50.2000">
    <property type="entry name" value="Glycogen Phosphorylase B"/>
    <property type="match status" value="2"/>
</dbReference>
<dbReference type="HAMAP" id="MF_00484">
    <property type="entry name" value="Glycogen_synth"/>
    <property type="match status" value="1"/>
</dbReference>
<dbReference type="InterPro" id="IPR001296">
    <property type="entry name" value="Glyco_trans_1"/>
</dbReference>
<dbReference type="InterPro" id="IPR011835">
    <property type="entry name" value="GS/SS"/>
</dbReference>
<dbReference type="InterPro" id="IPR013534">
    <property type="entry name" value="Starch_synth_cat_dom"/>
</dbReference>
<dbReference type="NCBIfam" id="TIGR02095">
    <property type="entry name" value="glgA"/>
    <property type="match status" value="1"/>
</dbReference>
<dbReference type="NCBIfam" id="NF001903">
    <property type="entry name" value="PRK00654.2-2"/>
    <property type="match status" value="1"/>
</dbReference>
<dbReference type="PANTHER" id="PTHR45825:SF11">
    <property type="entry name" value="ALPHA AMYLASE DOMAIN-CONTAINING PROTEIN"/>
    <property type="match status" value="1"/>
</dbReference>
<dbReference type="PANTHER" id="PTHR45825">
    <property type="entry name" value="GRANULE-BOUND STARCH SYNTHASE 1, CHLOROPLASTIC/AMYLOPLASTIC"/>
    <property type="match status" value="1"/>
</dbReference>
<dbReference type="Pfam" id="PF08323">
    <property type="entry name" value="Glyco_transf_5"/>
    <property type="match status" value="1"/>
</dbReference>
<dbReference type="Pfam" id="PF00534">
    <property type="entry name" value="Glycos_transf_1"/>
    <property type="match status" value="1"/>
</dbReference>
<dbReference type="SUPFAM" id="SSF53756">
    <property type="entry name" value="UDP-Glycosyltransferase/glycogen phosphorylase"/>
    <property type="match status" value="1"/>
</dbReference>
<accession>A0KPQ1</accession>
<feature type="chain" id="PRO_1000014340" description="Glycogen synthase">
    <location>
        <begin position="1"/>
        <end position="486"/>
    </location>
</feature>
<feature type="binding site" evidence="1">
    <location>
        <position position="20"/>
    </location>
    <ligand>
        <name>ADP-alpha-D-glucose</name>
        <dbReference type="ChEBI" id="CHEBI:57498"/>
    </ligand>
</feature>
<proteinExistence type="inferred from homology"/>
<gene>
    <name evidence="1" type="primary">glgA</name>
    <name type="ordered locus">AHA_3804</name>
</gene>